<name>LMT3_LOCMI</name>
<organism>
    <name type="scientific">Locusta migratoria</name>
    <name type="common">Migratory locust</name>
    <dbReference type="NCBI Taxonomy" id="7004"/>
    <lineage>
        <taxon>Eukaryota</taxon>
        <taxon>Metazoa</taxon>
        <taxon>Ecdysozoa</taxon>
        <taxon>Arthropoda</taxon>
        <taxon>Hexapoda</taxon>
        <taxon>Insecta</taxon>
        <taxon>Pterygota</taxon>
        <taxon>Neoptera</taxon>
        <taxon>Polyneoptera</taxon>
        <taxon>Orthoptera</taxon>
        <taxon>Caelifera</taxon>
        <taxon>Acrididea</taxon>
        <taxon>Acridomorpha</taxon>
        <taxon>Acridoidea</taxon>
        <taxon>Acrididae</taxon>
        <taxon>Oedipodinae</taxon>
        <taxon>Locusta</taxon>
    </lineage>
</organism>
<comment type="function">
    <text>Potent mediator of visceral muscle contractile activity (myotropic activity).</text>
</comment>
<comment type="subcellular location">
    <subcellularLocation>
        <location>Secreted</location>
    </subcellularLocation>
</comment>
<comment type="similarity">
    <text evidence="2">Belongs to the pyrokinin family.</text>
</comment>
<dbReference type="PIR" id="A61620">
    <property type="entry name" value="A61620"/>
</dbReference>
<dbReference type="GO" id="GO:0005576">
    <property type="term" value="C:extracellular region"/>
    <property type="evidence" value="ECO:0007669"/>
    <property type="project" value="UniProtKB-SubCell"/>
</dbReference>
<dbReference type="GO" id="GO:0005184">
    <property type="term" value="F:neuropeptide hormone activity"/>
    <property type="evidence" value="ECO:0007669"/>
    <property type="project" value="InterPro"/>
</dbReference>
<dbReference type="GO" id="GO:0007218">
    <property type="term" value="P:neuropeptide signaling pathway"/>
    <property type="evidence" value="ECO:0007669"/>
    <property type="project" value="UniProtKB-KW"/>
</dbReference>
<dbReference type="InterPro" id="IPR001484">
    <property type="entry name" value="Pyrokinin_CS"/>
</dbReference>
<dbReference type="PROSITE" id="PS00539">
    <property type="entry name" value="PYROKININ"/>
    <property type="match status" value="1"/>
</dbReference>
<sequence length="9" mass="1140">RQQPFVPRL</sequence>
<protein>
    <recommendedName>
        <fullName>Locustamyotropin-3</fullName>
    </recommendedName>
    <alternativeName>
        <fullName>Lom-MT-3</fullName>
    </alternativeName>
</protein>
<reference key="1">
    <citation type="journal article" date="1992" name="Insect Biochem. Mol. Biol.">
        <title>Isolation, identification and synthesis of locustamyotropin III and IV, two additional neuropeptides of Locusta migratoria: members of the locustamyotropin peptide family.</title>
        <authorList>
            <person name="Schoofs L."/>
            <person name="Holman G.M."/>
            <person name="Hayes T.K."/>
            <person name="Nachman R.J."/>
            <person name="Kochansky J.P."/>
            <person name="de Loof A."/>
        </authorList>
    </citation>
    <scope>PROTEIN SEQUENCE</scope>
    <scope>AMIDATION AT LEU-9</scope>
    <scope>SYNTHESIS</scope>
    <source>
        <tissue>Brain</tissue>
    </source>
</reference>
<accession>P41489</accession>
<feature type="peptide" id="PRO_0000044315" description="Locustamyotropin-3">
    <location>
        <begin position="1"/>
        <end position="9"/>
    </location>
</feature>
<feature type="modified residue" description="Leucine amide" evidence="1">
    <location>
        <position position="9"/>
    </location>
</feature>
<keyword id="KW-0027">Amidation</keyword>
<keyword id="KW-0903">Direct protein sequencing</keyword>
<keyword id="KW-0527">Neuropeptide</keyword>
<keyword id="KW-0964">Secreted</keyword>
<proteinExistence type="evidence at protein level"/>
<evidence type="ECO:0000269" key="1">
    <source ref="1"/>
</evidence>
<evidence type="ECO:0000305" key="2"/>